<gene>
    <name type="primary">CDH-1</name>
</gene>
<gene>
    <name type="primary">CDH-2</name>
</gene>
<evidence type="ECO:0000250" key="1">
    <source>
        <dbReference type="UniProtKB" id="E4QP00"/>
    </source>
</evidence>
<evidence type="ECO:0000255" key="2"/>
<evidence type="ECO:0000256" key="3">
    <source>
        <dbReference type="SAM" id="MobiDB-lite"/>
    </source>
</evidence>
<evidence type="ECO:0000269" key="4">
    <source>
    </source>
</evidence>
<evidence type="ECO:0000305" key="5"/>
<evidence type="ECO:0007829" key="6">
    <source>
        <dbReference type="PDB" id="1D7B"/>
    </source>
</evidence>
<evidence type="ECO:0007829" key="7">
    <source>
        <dbReference type="PDB" id="1KDG"/>
    </source>
</evidence>
<reference key="1">
    <citation type="journal article" date="1996" name="Appl. Environ. Microbiol.">
        <title>Cloning of a cDNA encoding cellobiose dehydrogenase, a hemoflavoenzyme from Phanerochaete chrysosporium.</title>
        <authorList>
            <person name="Li B."/>
            <person name="Nagalla S.R."/>
            <person name="Renganathan V."/>
        </authorList>
    </citation>
    <scope>NUCLEOTIDE SEQUENCE [MRNA]</scope>
    <source>
        <strain>ATCC 201542 / OGC101</strain>
    </source>
</reference>
<reference key="2">
    <citation type="journal article" date="1997" name="Appl. Environ. Microbiol.">
        <title>Cellobiose dehydrogenase from Phanerochaete chrysosporium is encoded by two allelic variants.</title>
        <authorList>
            <person name="Li B."/>
            <person name="Nagalla S.R."/>
            <person name="Renganathan V."/>
        </authorList>
    </citation>
    <scope>NUCLEOTIDE SEQUENCE [GENOMIC DNA]</scope>
    <source>
        <strain>ATCC 201542 / OGC101</strain>
    </source>
</reference>
<reference key="3">
    <citation type="journal article" date="2000" name="Structure">
        <title>A new scaffold for binding haem in the cytochrome domain of the extracellular flavocytochrome cellobiose dehydrogenase.</title>
        <authorList>
            <person name="Hallberg B.M."/>
            <person name="Bergfors T."/>
            <person name="Boeckbro K."/>
            <person name="Pettersson G."/>
            <person name="Henriksson G."/>
            <person name="Divne C."/>
        </authorList>
    </citation>
    <scope>X-RAY CRYSTALLOGRAPHY (1.9 ANGSTROMS) OF 19-208</scope>
    <scope>PYROGLUTAMATE FORMATION AT GLN-19</scope>
</reference>
<organism>
    <name type="scientific">Phanerodontia chrysosporium</name>
    <name type="common">White-rot fungus</name>
    <name type="synonym">Sporotrichum pruinosum</name>
    <dbReference type="NCBI Taxonomy" id="2822231"/>
    <lineage>
        <taxon>Eukaryota</taxon>
        <taxon>Fungi</taxon>
        <taxon>Dikarya</taxon>
        <taxon>Basidiomycota</taxon>
        <taxon>Agaricomycotina</taxon>
        <taxon>Agaricomycetes</taxon>
        <taxon>Polyporales</taxon>
        <taxon>Phanerochaetaceae</taxon>
        <taxon>Phanerodontia</taxon>
    </lineage>
</organism>
<protein>
    <recommendedName>
        <fullName>Cellobiose dehydrogenase</fullName>
        <shortName>CDH</shortName>
        <ecNumber>1.1.99.18</ecNumber>
    </recommendedName>
    <alternativeName>
        <fullName>Cellobiose-quinone oxidoreductase</fullName>
    </alternativeName>
</protein>
<name>CDH_PHACH</name>
<sequence length="773" mass="82007">MLGRSLLALLPFVGLAFSQSASQFTDPTTGFQFTGITDPVHDVTYGFVFPPLATSGAQSTEFIGEVVAPIASKWIGIALGGAMNNDLLLVAWANGNQIVSSTRWATGYVQPTAYTGTATLTTLPETTINSTHWKWVFRCQGCTEWNNGGGIDVTSQGVLAWAFSNVAVDDPSDPQSTFSEHTDFGFFGIDYSTAHSANYQNYLNGDSGNPTTTSTKPTSTSSSVTTGPTVSATPYDYIIVGAGPGGIIAADRLSEAGKKVLLLERGGPSTKQTGGTYVAPWATSSGLTKFDIPGLFESLFTDSNPFWWCKDITVFAGCLVGGGTSVNGALYWYPNDGDFSSSVGWPSSWTNHAPYTSKLSSRLPSTDHPSTDGQRYLEQSFNVVSQLLKGQGYNQATINDNPNYKDHVFGYSAFDFLNGKRAGPVATYLQTALARPNFTFKTNVMVSNVVRNGSQILGVQTNDPTLGPNGFIPVTPKGRVILSAGAFGTSRILFQSGIGPTDMIQTVQSNPTAAAALPPQNQWINLPVGMNAQDNPSINLVFTHPSIDAYENWADVWSNPRPADAAQYLANQSGVFAGASPKLNFWRAYSGSDGFTRYAQGTVRPGAASVNSSLPYNASQIFTITVYLSTGIQSRGRIGIDAALRGTVLTPPWLVNPVDKTVLLQALHDVVSNIGSIPGLTMITPDVTQTLEEYVDAYDPATMNSNHWVSSTTIGSSPQSAVVDSNVKVFGTNNLFIVDAGIIPHLPTGNPQGTLMSAAEQAAAKILALAGGP</sequence>
<feature type="signal peptide">
    <location>
        <begin position="1"/>
        <end position="18"/>
    </location>
</feature>
<feature type="chain" id="PRO_0000012331" description="Cellobiose dehydrogenase">
    <location>
        <begin position="19"/>
        <end position="773"/>
    </location>
</feature>
<feature type="region of interest" description="Heme domain">
    <location>
        <begin position="19"/>
        <end position="208"/>
    </location>
</feature>
<feature type="region of interest" description="Disordered" evidence="3">
    <location>
        <begin position="203"/>
        <end position="227"/>
    </location>
</feature>
<feature type="region of interest" description="Oxidoreductase">
    <location>
        <begin position="235"/>
        <end position="773"/>
    </location>
</feature>
<feature type="compositionally biased region" description="Low complexity" evidence="3">
    <location>
        <begin position="210"/>
        <end position="227"/>
    </location>
</feature>
<feature type="active site" description="Proton acceptor" evidence="1">
    <location>
        <position position="707"/>
    </location>
</feature>
<feature type="binding site" description="axial binding residue">
    <location>
        <position position="83"/>
    </location>
    <ligand>
        <name>heme</name>
        <dbReference type="ChEBI" id="CHEBI:30413"/>
    </ligand>
    <ligandPart>
        <name>Fe</name>
        <dbReference type="ChEBI" id="CHEBI:18248"/>
    </ligandPart>
</feature>
<feature type="binding site" description="axial binding residue">
    <location>
        <position position="181"/>
    </location>
    <ligand>
        <name>heme</name>
        <dbReference type="ChEBI" id="CHEBI:30413"/>
    </ligand>
    <ligandPart>
        <name>Fe</name>
        <dbReference type="ChEBI" id="CHEBI:18248"/>
    </ligandPart>
</feature>
<feature type="binding site" evidence="2">
    <location>
        <begin position="236"/>
        <end position="265"/>
    </location>
    <ligand>
        <name>FAD</name>
        <dbReference type="ChEBI" id="CHEBI:57692"/>
    </ligand>
</feature>
<feature type="modified residue" description="Pyrrolidone carboxylic acid" evidence="4">
    <location>
        <position position="19"/>
    </location>
</feature>
<feature type="strand" evidence="6">
    <location>
        <begin position="22"/>
        <end position="25"/>
    </location>
</feature>
<feature type="turn" evidence="6">
    <location>
        <begin position="27"/>
        <end position="29"/>
    </location>
</feature>
<feature type="strand" evidence="6">
    <location>
        <begin position="32"/>
        <end position="38"/>
    </location>
</feature>
<feature type="turn" evidence="6">
    <location>
        <begin position="39"/>
        <end position="42"/>
    </location>
</feature>
<feature type="strand" evidence="6">
    <location>
        <begin position="43"/>
        <end position="49"/>
    </location>
</feature>
<feature type="strand" evidence="6">
    <location>
        <begin position="54"/>
        <end position="56"/>
    </location>
</feature>
<feature type="strand" evidence="6">
    <location>
        <begin position="62"/>
        <end position="69"/>
    </location>
</feature>
<feature type="strand" evidence="6">
    <location>
        <begin position="74"/>
        <end position="78"/>
    </location>
</feature>
<feature type="strand" evidence="6">
    <location>
        <begin position="81"/>
        <end position="86"/>
    </location>
</feature>
<feature type="strand" evidence="6">
    <location>
        <begin position="88"/>
        <end position="94"/>
    </location>
</feature>
<feature type="strand" evidence="6">
    <location>
        <begin position="97"/>
        <end position="104"/>
    </location>
</feature>
<feature type="strand" evidence="6">
    <location>
        <begin position="106"/>
        <end position="109"/>
    </location>
</feature>
<feature type="strand" evidence="6">
    <location>
        <begin position="119"/>
        <end position="122"/>
    </location>
</feature>
<feature type="strand" evidence="6">
    <location>
        <begin position="130"/>
        <end position="140"/>
    </location>
</feature>
<feature type="turn" evidence="6">
    <location>
        <begin position="141"/>
        <end position="143"/>
    </location>
</feature>
<feature type="strand" evidence="6">
    <location>
        <begin position="155"/>
        <end position="166"/>
    </location>
</feature>
<feature type="strand" evidence="6">
    <location>
        <begin position="182"/>
        <end position="190"/>
    </location>
</feature>
<feature type="helix" evidence="6">
    <location>
        <begin position="191"/>
        <end position="193"/>
    </location>
</feature>
<feature type="helix" evidence="6">
    <location>
        <begin position="199"/>
        <end position="203"/>
    </location>
</feature>
<feature type="strand" evidence="7">
    <location>
        <begin position="235"/>
        <end position="240"/>
    </location>
</feature>
<feature type="helix" evidence="7">
    <location>
        <begin position="244"/>
        <end position="255"/>
    </location>
</feature>
<feature type="strand" evidence="7">
    <location>
        <begin position="260"/>
        <end position="263"/>
    </location>
</feature>
<feature type="helix" evidence="7">
    <location>
        <begin position="271"/>
        <end position="273"/>
    </location>
</feature>
<feature type="helix" evidence="7">
    <location>
        <begin position="280"/>
        <end position="285"/>
    </location>
</feature>
<feature type="turn" evidence="7">
    <location>
        <begin position="289"/>
        <end position="291"/>
    </location>
</feature>
<feature type="helix" evidence="7">
    <location>
        <begin position="293"/>
        <end position="300"/>
    </location>
</feature>
<feature type="strand" evidence="7">
    <location>
        <begin position="312"/>
        <end position="314"/>
    </location>
</feature>
<feature type="helix" evidence="7">
    <location>
        <begin position="322"/>
        <end position="325"/>
    </location>
</feature>
<feature type="helix" evidence="7">
    <location>
        <begin position="336"/>
        <end position="339"/>
    </location>
</feature>
<feature type="helix" evidence="7">
    <location>
        <begin position="341"/>
        <end position="343"/>
    </location>
</feature>
<feature type="helix" evidence="7">
    <location>
        <begin position="347"/>
        <end position="349"/>
    </location>
</feature>
<feature type="helix" evidence="7">
    <location>
        <begin position="353"/>
        <end position="362"/>
    </location>
</feature>
<feature type="helix" evidence="7">
    <location>
        <begin position="379"/>
        <end position="389"/>
    </location>
</feature>
<feature type="turn" evidence="7">
    <location>
        <begin position="390"/>
        <end position="392"/>
    </location>
</feature>
<feature type="helix" evidence="7">
    <location>
        <begin position="398"/>
        <end position="400"/>
    </location>
</feature>
<feature type="strand" evidence="7">
    <location>
        <begin position="408"/>
        <end position="411"/>
    </location>
</feature>
<feature type="helix" evidence="7">
    <location>
        <begin position="423"/>
        <end position="426"/>
    </location>
</feature>
<feature type="helix" evidence="7">
    <location>
        <begin position="428"/>
        <end position="433"/>
    </location>
</feature>
<feature type="strand" evidence="7">
    <location>
        <begin position="438"/>
        <end position="441"/>
    </location>
</feature>
<feature type="strand" evidence="7">
    <location>
        <begin position="446"/>
        <end position="452"/>
    </location>
</feature>
<feature type="strand" evidence="7">
    <location>
        <begin position="455"/>
        <end position="462"/>
    </location>
</feature>
<feature type="helix" evidence="7">
    <location>
        <begin position="468"/>
        <end position="470"/>
    </location>
</feature>
<feature type="strand" evidence="7">
    <location>
        <begin position="471"/>
        <end position="482"/>
    </location>
</feature>
<feature type="helix" evidence="7">
    <location>
        <begin position="485"/>
        <end position="495"/>
    </location>
</feature>
<feature type="helix" evidence="7">
    <location>
        <begin position="501"/>
        <end position="508"/>
    </location>
</feature>
<feature type="helix" evidence="7">
    <location>
        <begin position="511"/>
        <end position="516"/>
    </location>
</feature>
<feature type="helix" evidence="7">
    <location>
        <begin position="520"/>
        <end position="522"/>
    </location>
</feature>
<feature type="turn" evidence="7">
    <location>
        <begin position="528"/>
        <end position="531"/>
    </location>
</feature>
<feature type="strand" evidence="7">
    <location>
        <begin position="538"/>
        <end position="543"/>
    </location>
</feature>
<feature type="helix" evidence="7">
    <location>
        <begin position="550"/>
        <end position="553"/>
    </location>
</feature>
<feature type="turn" evidence="7">
    <location>
        <begin position="554"/>
        <end position="558"/>
    </location>
</feature>
<feature type="helix" evidence="7">
    <location>
        <begin position="562"/>
        <end position="571"/>
    </location>
</feature>
<feature type="helix" evidence="7">
    <location>
        <begin position="575"/>
        <end position="577"/>
    </location>
</feature>
<feature type="strand" evidence="7">
    <location>
        <begin position="583"/>
        <end position="590"/>
    </location>
</feature>
<feature type="strand" evidence="7">
    <location>
        <begin position="596"/>
        <end position="606"/>
    </location>
</feature>
<feature type="helix" evidence="7">
    <location>
        <begin position="618"/>
        <end position="620"/>
    </location>
</feature>
<feature type="strand" evidence="7">
    <location>
        <begin position="621"/>
        <end position="628"/>
    </location>
</feature>
<feature type="strand" evidence="7">
    <location>
        <begin position="636"/>
        <end position="640"/>
    </location>
</feature>
<feature type="strand" evidence="7">
    <location>
        <begin position="646"/>
        <end position="650"/>
    </location>
</feature>
<feature type="helix" evidence="7">
    <location>
        <begin position="657"/>
        <end position="670"/>
    </location>
</feature>
<feature type="turn" evidence="7">
    <location>
        <begin position="671"/>
        <end position="673"/>
    </location>
</feature>
<feature type="helix" evidence="7">
    <location>
        <begin position="674"/>
        <end position="676"/>
    </location>
</feature>
<feature type="strand" evidence="7">
    <location>
        <begin position="681"/>
        <end position="685"/>
    </location>
</feature>
<feature type="helix" evidence="7">
    <location>
        <begin position="691"/>
        <end position="697"/>
    </location>
</feature>
<feature type="helix" evidence="7">
    <location>
        <begin position="700"/>
        <end position="703"/>
    </location>
</feature>
<feature type="turn" evidence="7">
    <location>
        <begin position="718"/>
        <end position="720"/>
    </location>
</feature>
<feature type="strand" evidence="7">
    <location>
        <begin position="733"/>
        <end position="737"/>
    </location>
</feature>
<feature type="helix" evidence="7">
    <location>
        <begin position="740"/>
        <end position="742"/>
    </location>
</feature>
<feature type="helix" evidence="7">
    <location>
        <begin position="752"/>
        <end position="768"/>
    </location>
</feature>
<keyword id="KW-0002">3D-structure</keyword>
<keyword id="KW-0119">Carbohydrate metabolism</keyword>
<keyword id="KW-0136">Cellulose degradation</keyword>
<keyword id="KW-0274">FAD</keyword>
<keyword id="KW-0285">Flavoprotein</keyword>
<keyword id="KW-0349">Heme</keyword>
<keyword id="KW-0408">Iron</keyword>
<keyword id="KW-0479">Metal-binding</keyword>
<keyword id="KW-0560">Oxidoreductase</keyword>
<keyword id="KW-0624">Polysaccharide degradation</keyword>
<keyword id="KW-0873">Pyrrolidone carboxylic acid</keyword>
<keyword id="KW-0964">Secreted</keyword>
<keyword id="KW-0732">Signal</keyword>
<dbReference type="EC" id="1.1.99.18"/>
<dbReference type="EMBL" id="U46081">
    <property type="protein sequence ID" value="AAC49277.1"/>
    <property type="molecule type" value="mRNA"/>
</dbReference>
<dbReference type="EMBL" id="U65888">
    <property type="protein sequence ID" value="AAB61455.1"/>
    <property type="molecule type" value="Genomic_DNA"/>
</dbReference>
<dbReference type="EMBL" id="U50409">
    <property type="protein sequence ID" value="AAB92262.1"/>
    <property type="molecule type" value="Genomic_DNA"/>
</dbReference>
<dbReference type="PDB" id="1D7B">
    <property type="method" value="X-ray"/>
    <property type="resolution" value="1.90 A"/>
    <property type="chains" value="A/B=20-204"/>
</dbReference>
<dbReference type="PDB" id="1D7C">
    <property type="method" value="X-ray"/>
    <property type="resolution" value="1.90 A"/>
    <property type="chains" value="A/B=20-208"/>
</dbReference>
<dbReference type="PDB" id="1D7D">
    <property type="method" value="X-ray"/>
    <property type="resolution" value="1.90 A"/>
    <property type="chains" value="A/B=20-204"/>
</dbReference>
<dbReference type="PDB" id="1KDG">
    <property type="method" value="X-ray"/>
    <property type="resolution" value="1.50 A"/>
    <property type="chains" value="A/B=228-773"/>
</dbReference>
<dbReference type="PDB" id="1NAA">
    <property type="method" value="X-ray"/>
    <property type="resolution" value="1.80 A"/>
    <property type="chains" value="A/B=233-773"/>
</dbReference>
<dbReference type="PDB" id="1PL3">
    <property type="method" value="X-ray"/>
    <property type="resolution" value="1.90 A"/>
    <property type="chains" value="A/B=19-204"/>
</dbReference>
<dbReference type="PDBsum" id="1D7B"/>
<dbReference type="PDBsum" id="1D7C"/>
<dbReference type="PDBsum" id="1D7D"/>
<dbReference type="PDBsum" id="1KDG"/>
<dbReference type="PDBsum" id="1NAA"/>
<dbReference type="PDBsum" id="1PL3"/>
<dbReference type="SMR" id="Q01738"/>
<dbReference type="CAZy" id="AA3">
    <property type="family name" value="Auxiliary Activities 3"/>
</dbReference>
<dbReference type="CAZy" id="AA8">
    <property type="family name" value="Auxiliary Activities 8"/>
</dbReference>
<dbReference type="EnsemblFungi" id="AGR57_11438T0">
    <property type="protein sequence ID" value="AGR57_11438T0-p1"/>
    <property type="gene ID" value="AGR57_11438"/>
</dbReference>
<dbReference type="VEuPathDB" id="FungiDB:AGR57_11438"/>
<dbReference type="OMA" id="GPIFWEI"/>
<dbReference type="BioCyc" id="MetaCyc:MONOMER-17578"/>
<dbReference type="BRENDA" id="1.1.99.18">
    <property type="organism ID" value="1380"/>
</dbReference>
<dbReference type="EvolutionaryTrace" id="Q01738"/>
<dbReference type="GO" id="GO:0005576">
    <property type="term" value="C:extracellular region"/>
    <property type="evidence" value="ECO:0007669"/>
    <property type="project" value="UniProtKB-SubCell"/>
</dbReference>
<dbReference type="GO" id="GO:0047735">
    <property type="term" value="F:cellobiose dehydrogenase (acceptor) activity"/>
    <property type="evidence" value="ECO:0007669"/>
    <property type="project" value="UniProtKB-EC"/>
</dbReference>
<dbReference type="GO" id="GO:0050660">
    <property type="term" value="F:flavin adenine dinucleotide binding"/>
    <property type="evidence" value="ECO:0007669"/>
    <property type="project" value="InterPro"/>
</dbReference>
<dbReference type="GO" id="GO:0046872">
    <property type="term" value="F:metal ion binding"/>
    <property type="evidence" value="ECO:0007669"/>
    <property type="project" value="UniProtKB-KW"/>
</dbReference>
<dbReference type="GO" id="GO:0030245">
    <property type="term" value="P:cellulose catabolic process"/>
    <property type="evidence" value="ECO:0007669"/>
    <property type="project" value="UniProtKB-KW"/>
</dbReference>
<dbReference type="CDD" id="cd09630">
    <property type="entry name" value="CDH_like_cytochrome"/>
    <property type="match status" value="1"/>
</dbReference>
<dbReference type="Gene3D" id="2.60.40.1210">
    <property type="entry name" value="Cellobiose dehydrogenase, cytochrome domain"/>
    <property type="match status" value="1"/>
</dbReference>
<dbReference type="Gene3D" id="3.30.410.10">
    <property type="entry name" value="Cholesterol Oxidase, domain 2"/>
    <property type="match status" value="1"/>
</dbReference>
<dbReference type="Gene3D" id="3.50.50.60">
    <property type="entry name" value="FAD/NAD(P)-binding domain"/>
    <property type="match status" value="1"/>
</dbReference>
<dbReference type="InterPro" id="IPR015920">
    <property type="entry name" value="Cellobiose_DH-like_cyt"/>
</dbReference>
<dbReference type="InterPro" id="IPR005018">
    <property type="entry name" value="DOMON_domain"/>
</dbReference>
<dbReference type="InterPro" id="IPR036188">
    <property type="entry name" value="FAD/NAD-bd_sf"/>
</dbReference>
<dbReference type="InterPro" id="IPR053208">
    <property type="entry name" value="GMC_Oxidoreductase_CD"/>
</dbReference>
<dbReference type="InterPro" id="IPR000172">
    <property type="entry name" value="GMC_OxRdtase_N"/>
</dbReference>
<dbReference type="InterPro" id="IPR007867">
    <property type="entry name" value="GMC_OxRtase_C"/>
</dbReference>
<dbReference type="PANTHER" id="PTHR47190:SF2">
    <property type="entry name" value="CELLOBIOSE DEHYDROGENASE (AFU_ORTHOLOGUE AFUA_2G17620)"/>
    <property type="match status" value="1"/>
</dbReference>
<dbReference type="PANTHER" id="PTHR47190">
    <property type="entry name" value="DEHYDROGENASE, PUTATIVE-RELATED"/>
    <property type="match status" value="1"/>
</dbReference>
<dbReference type="Pfam" id="PF16010">
    <property type="entry name" value="CDH-cyt"/>
    <property type="match status" value="1"/>
</dbReference>
<dbReference type="Pfam" id="PF05199">
    <property type="entry name" value="GMC_oxred_C"/>
    <property type="match status" value="1"/>
</dbReference>
<dbReference type="Pfam" id="PF00732">
    <property type="entry name" value="GMC_oxred_N"/>
    <property type="match status" value="1"/>
</dbReference>
<dbReference type="Pfam" id="PF13450">
    <property type="entry name" value="NAD_binding_8"/>
    <property type="match status" value="1"/>
</dbReference>
<dbReference type="PRINTS" id="PR00411">
    <property type="entry name" value="PNDRDTASEI"/>
</dbReference>
<dbReference type="SMART" id="SM00664">
    <property type="entry name" value="DoH"/>
    <property type="match status" value="1"/>
</dbReference>
<dbReference type="SUPFAM" id="SSF49344">
    <property type="entry name" value="CBD9-like"/>
    <property type="match status" value="1"/>
</dbReference>
<dbReference type="SUPFAM" id="SSF54373">
    <property type="entry name" value="FAD-linked reductases, C-terminal domain"/>
    <property type="match status" value="1"/>
</dbReference>
<dbReference type="SUPFAM" id="SSF51905">
    <property type="entry name" value="FAD/NAD(P)-binding domain"/>
    <property type="match status" value="1"/>
</dbReference>
<dbReference type="PROSITE" id="PS00623">
    <property type="entry name" value="GMC_OXRED_1"/>
    <property type="match status" value="1"/>
</dbReference>
<dbReference type="PROSITE" id="PS00624">
    <property type="entry name" value="GMC_OXRED_2"/>
    <property type="match status" value="1"/>
</dbReference>
<accession>Q01738</accession>
<accession>O00047</accession>
<proteinExistence type="evidence at protein level"/>
<comment type="function">
    <text>Degrades both lignin and cellulose. Oxidizes cellobiose to cellobionolactone.</text>
</comment>
<comment type="catalytic activity">
    <reaction>
        <text>D-cellobiose + A = D-cellobiono-1,5-lactone + AH2</text>
        <dbReference type="Rhea" id="RHEA:23484"/>
        <dbReference type="ChEBI" id="CHEBI:13193"/>
        <dbReference type="ChEBI" id="CHEBI:17057"/>
        <dbReference type="ChEBI" id="CHEBI:17499"/>
        <dbReference type="ChEBI" id="CHEBI:17863"/>
        <dbReference type="EC" id="1.1.99.18"/>
    </reaction>
</comment>
<comment type="cofactor">
    <cofactor>
        <name>FAD</name>
        <dbReference type="ChEBI" id="CHEBI:57692"/>
    </cofactor>
    <text>Binds 1 FAD per subunit.</text>
</comment>
<comment type="cofactor">
    <cofactor>
        <name>heme</name>
        <dbReference type="ChEBI" id="CHEBI:30413"/>
    </cofactor>
    <text>Binds 1 heme group per subunit.</text>
</comment>
<comment type="subcellular location">
    <subcellularLocation>
        <location>Secreted</location>
    </subcellularLocation>
</comment>
<comment type="similarity">
    <text evidence="5">In the C-terminal section; belongs to the GMC oxidoreductase family.</text>
</comment>